<gene>
    <name evidence="1" type="primary">glsA1</name>
    <name type="ordered locus">BH2627</name>
</gene>
<protein>
    <recommendedName>
        <fullName evidence="1">Glutaminase 1</fullName>
        <ecNumber evidence="1">3.5.1.2</ecNumber>
    </recommendedName>
</protein>
<evidence type="ECO:0000255" key="1">
    <source>
        <dbReference type="HAMAP-Rule" id="MF_00313"/>
    </source>
</evidence>
<accession>Q9K9L8</accession>
<keyword id="KW-0378">Hydrolase</keyword>
<keyword id="KW-1185">Reference proteome</keyword>
<organism>
    <name type="scientific">Halalkalibacterium halodurans (strain ATCC BAA-125 / DSM 18197 / FERM 7344 / JCM 9153 / C-125)</name>
    <name type="common">Bacillus halodurans</name>
    <dbReference type="NCBI Taxonomy" id="272558"/>
    <lineage>
        <taxon>Bacteria</taxon>
        <taxon>Bacillati</taxon>
        <taxon>Bacillota</taxon>
        <taxon>Bacilli</taxon>
        <taxon>Bacillales</taxon>
        <taxon>Bacillaceae</taxon>
        <taxon>Halalkalibacterium (ex Joshi et al. 2022)</taxon>
    </lineage>
</organism>
<comment type="catalytic activity">
    <reaction evidence="1">
        <text>L-glutamine + H2O = L-glutamate + NH4(+)</text>
        <dbReference type="Rhea" id="RHEA:15889"/>
        <dbReference type="ChEBI" id="CHEBI:15377"/>
        <dbReference type="ChEBI" id="CHEBI:28938"/>
        <dbReference type="ChEBI" id="CHEBI:29985"/>
        <dbReference type="ChEBI" id="CHEBI:58359"/>
        <dbReference type="EC" id="3.5.1.2"/>
    </reaction>
</comment>
<comment type="subunit">
    <text evidence="1">Homotetramer.</text>
</comment>
<comment type="similarity">
    <text evidence="1">Belongs to the glutaminase family.</text>
</comment>
<feature type="chain" id="PRO_0000110592" description="Glutaminase 1">
    <location>
        <begin position="1"/>
        <end position="308"/>
    </location>
</feature>
<feature type="binding site" evidence="1">
    <location>
        <position position="64"/>
    </location>
    <ligand>
        <name>substrate</name>
    </ligand>
</feature>
<feature type="binding site" evidence="1">
    <location>
        <position position="116"/>
    </location>
    <ligand>
        <name>substrate</name>
    </ligand>
</feature>
<feature type="binding site" evidence="1">
    <location>
        <position position="161"/>
    </location>
    <ligand>
        <name>substrate</name>
    </ligand>
</feature>
<feature type="binding site" evidence="1">
    <location>
        <position position="168"/>
    </location>
    <ligand>
        <name>substrate</name>
    </ligand>
</feature>
<feature type="binding site" evidence="1">
    <location>
        <position position="192"/>
    </location>
    <ligand>
        <name>substrate</name>
    </ligand>
</feature>
<feature type="binding site" evidence="1">
    <location>
        <position position="244"/>
    </location>
    <ligand>
        <name>substrate</name>
    </ligand>
</feature>
<feature type="binding site" evidence="1">
    <location>
        <position position="262"/>
    </location>
    <ligand>
        <name>substrate</name>
    </ligand>
</feature>
<reference key="1">
    <citation type="journal article" date="2000" name="Nucleic Acids Res.">
        <title>Complete genome sequence of the alkaliphilic bacterium Bacillus halodurans and genomic sequence comparison with Bacillus subtilis.</title>
        <authorList>
            <person name="Takami H."/>
            <person name="Nakasone K."/>
            <person name="Takaki Y."/>
            <person name="Maeno G."/>
            <person name="Sasaki R."/>
            <person name="Masui N."/>
            <person name="Fuji F."/>
            <person name="Hirama C."/>
            <person name="Nakamura Y."/>
            <person name="Ogasawara N."/>
            <person name="Kuhara S."/>
            <person name="Horikoshi K."/>
        </authorList>
    </citation>
    <scope>NUCLEOTIDE SEQUENCE [LARGE SCALE GENOMIC DNA]</scope>
    <source>
        <strain>ATCC BAA-125 / DSM 18197 / FERM 7344 / JCM 9153 / C-125</strain>
    </source>
</reference>
<name>GLSA1_HALH5</name>
<proteinExistence type="inferred from homology"/>
<sequence>MWKQDETLEQIVLECKKYTEEGTVASYIPALAKADVSTLGIAIYRGGDEQVIAGDADEKFTLQSISKVIALALALLDVGEEAVFSKVGMEPTGDPFNSISKLETSVPSKPLNPMINAGALAVTNMIIGETTEQSLGRLLSFIHELTKNPTITYNLEVAQSEFDTAFLNRSLSYFLKQHGVIQADVEQLLDLYTKQCAIEMCCSDLARIGYVFANEGRDPDTGQRIVPLHVARIIKTFMVTCGMYNASGEFAIRVGIPAKSGVSGAILALVPNKYGIAVYSPALDEKGNSLAGIKLLETLSCREEWSIF</sequence>
<dbReference type="EC" id="3.5.1.2" evidence="1"/>
<dbReference type="EMBL" id="BA000004">
    <property type="protein sequence ID" value="BAB06346.1"/>
    <property type="molecule type" value="Genomic_DNA"/>
</dbReference>
<dbReference type="PIR" id="C83978">
    <property type="entry name" value="C83978"/>
</dbReference>
<dbReference type="RefSeq" id="WP_010898778.1">
    <property type="nucleotide sequence ID" value="NC_002570.2"/>
</dbReference>
<dbReference type="SMR" id="Q9K9L8"/>
<dbReference type="STRING" id="272558.gene:10728525"/>
<dbReference type="KEGG" id="bha:BH2627"/>
<dbReference type="eggNOG" id="COG2066">
    <property type="taxonomic scope" value="Bacteria"/>
</dbReference>
<dbReference type="HOGENOM" id="CLU_027932_1_0_9"/>
<dbReference type="OrthoDB" id="9788822at2"/>
<dbReference type="Proteomes" id="UP000001258">
    <property type="component" value="Chromosome"/>
</dbReference>
<dbReference type="GO" id="GO:0004359">
    <property type="term" value="F:glutaminase activity"/>
    <property type="evidence" value="ECO:0007669"/>
    <property type="project" value="UniProtKB-UniRule"/>
</dbReference>
<dbReference type="GO" id="GO:0006537">
    <property type="term" value="P:glutamate biosynthetic process"/>
    <property type="evidence" value="ECO:0007669"/>
    <property type="project" value="TreeGrafter"/>
</dbReference>
<dbReference type="GO" id="GO:0006543">
    <property type="term" value="P:glutamine catabolic process"/>
    <property type="evidence" value="ECO:0007669"/>
    <property type="project" value="TreeGrafter"/>
</dbReference>
<dbReference type="FunFam" id="3.40.710.10:FF:000005">
    <property type="entry name" value="Glutaminase"/>
    <property type="match status" value="1"/>
</dbReference>
<dbReference type="Gene3D" id="3.40.710.10">
    <property type="entry name" value="DD-peptidase/beta-lactamase superfamily"/>
    <property type="match status" value="1"/>
</dbReference>
<dbReference type="HAMAP" id="MF_00313">
    <property type="entry name" value="Glutaminase"/>
    <property type="match status" value="1"/>
</dbReference>
<dbReference type="InterPro" id="IPR012338">
    <property type="entry name" value="Beta-lactam/transpept-like"/>
</dbReference>
<dbReference type="InterPro" id="IPR015868">
    <property type="entry name" value="Glutaminase"/>
</dbReference>
<dbReference type="NCBIfam" id="TIGR03814">
    <property type="entry name" value="Gln_ase"/>
    <property type="match status" value="1"/>
</dbReference>
<dbReference type="PANTHER" id="PTHR12544">
    <property type="entry name" value="GLUTAMINASE"/>
    <property type="match status" value="1"/>
</dbReference>
<dbReference type="PANTHER" id="PTHR12544:SF29">
    <property type="entry name" value="GLUTAMINASE"/>
    <property type="match status" value="1"/>
</dbReference>
<dbReference type="Pfam" id="PF04960">
    <property type="entry name" value="Glutaminase"/>
    <property type="match status" value="1"/>
</dbReference>
<dbReference type="SUPFAM" id="SSF56601">
    <property type="entry name" value="beta-lactamase/transpeptidase-like"/>
    <property type="match status" value="1"/>
</dbReference>